<comment type="function">
    <text evidence="2">Component of the ubiquinol-cytochrome c reductase complex (complex III or cytochrome b-c1 complex) that is part of the mitochondrial respiratory chain. The b-c1 complex mediates electron transfer from ubiquinol to cytochrome c. Contributes to the generation of a proton gradient across the mitochondrial membrane that is then used for ATP synthesis.</text>
</comment>
<comment type="cofactor">
    <cofactor evidence="2">
        <name>heme b</name>
        <dbReference type="ChEBI" id="CHEBI:60344"/>
    </cofactor>
    <text evidence="2">Binds 2 heme b groups non-covalently.</text>
</comment>
<comment type="subunit">
    <text evidence="2">The cytochrome bc1 complex contains 11 subunits: 3 respiratory subunits (MT-CYB, CYC1 and UQCRFS1), 2 core proteins (UQCRC1 and UQCRC2) and 6 low-molecular weight proteins (UQCRH/QCR6, UQCRB/QCR7, UQCRQ/QCR8, UQCR10/QCR9, UQCR11/QCR10 and a cleavage product of UQCRFS1). This cytochrome bc1 complex then forms a dimer.</text>
</comment>
<comment type="subcellular location">
    <subcellularLocation>
        <location evidence="2">Mitochondrion inner membrane</location>
        <topology evidence="2">Multi-pass membrane protein</topology>
    </subcellularLocation>
</comment>
<comment type="miscellaneous">
    <text evidence="1">Heme 1 (or BL or b562) is low-potential and absorbs at about 562 nm, and heme 2 (or BH or b566) is high-potential and absorbs at about 566 nm.</text>
</comment>
<comment type="similarity">
    <text evidence="3 4">Belongs to the cytochrome b family.</text>
</comment>
<comment type="caution">
    <text evidence="2">The full-length protein contains only eight transmembrane helices, not nine as predicted by bioinformatics tools.</text>
</comment>
<evidence type="ECO:0000250" key="1"/>
<evidence type="ECO:0000250" key="2">
    <source>
        <dbReference type="UniProtKB" id="P00157"/>
    </source>
</evidence>
<evidence type="ECO:0000255" key="3">
    <source>
        <dbReference type="PROSITE-ProRule" id="PRU00967"/>
    </source>
</evidence>
<evidence type="ECO:0000255" key="4">
    <source>
        <dbReference type="PROSITE-ProRule" id="PRU00968"/>
    </source>
</evidence>
<protein>
    <recommendedName>
        <fullName>Cytochrome b</fullName>
    </recommendedName>
    <alternativeName>
        <fullName>Complex III subunit 3</fullName>
    </alternativeName>
    <alternativeName>
        <fullName>Complex III subunit III</fullName>
    </alternativeName>
    <alternativeName>
        <fullName>Cytochrome b-c1 complex subunit 3</fullName>
    </alternativeName>
    <alternativeName>
        <fullName>Ubiquinol-cytochrome-c reductase complex cytochrome b subunit</fullName>
    </alternativeName>
</protein>
<feature type="chain" id="PRO_0000061533" description="Cytochrome b">
    <location>
        <begin position="1" status="less than"/>
        <end position="308" status="greater than"/>
    </location>
</feature>
<feature type="transmembrane region" description="Helical" evidence="2">
    <location>
        <begin position="1"/>
        <end position="21"/>
    </location>
</feature>
<feature type="transmembrane region" description="Helical" evidence="2">
    <location>
        <begin position="45"/>
        <end position="66"/>
    </location>
</feature>
<feature type="transmembrane region" description="Helical" evidence="2">
    <location>
        <begin position="81"/>
        <end position="101"/>
    </location>
</feature>
<feature type="transmembrane region" description="Helical" evidence="2">
    <location>
        <begin position="146"/>
        <end position="166"/>
    </location>
</feature>
<feature type="transmembrane region" description="Helical" evidence="2">
    <location>
        <begin position="194"/>
        <end position="214"/>
    </location>
</feature>
<feature type="transmembrane region" description="Helical" evidence="2">
    <location>
        <begin position="256"/>
        <end position="276"/>
    </location>
</feature>
<feature type="transmembrane region" description="Helical" evidence="2">
    <location>
        <begin position="288"/>
        <end position="308"/>
    </location>
</feature>
<feature type="binding site" description="axial binding residue" evidence="2">
    <location>
        <position position="51"/>
    </location>
    <ligand>
        <name>heme b</name>
        <dbReference type="ChEBI" id="CHEBI:60344"/>
        <label>b562</label>
    </ligand>
    <ligandPart>
        <name>Fe</name>
        <dbReference type="ChEBI" id="CHEBI:18248"/>
    </ligandPart>
</feature>
<feature type="binding site" description="axial binding residue" evidence="2">
    <location>
        <position position="65"/>
    </location>
    <ligand>
        <name>heme b</name>
        <dbReference type="ChEBI" id="CHEBI:60344"/>
        <label>b566</label>
    </ligand>
    <ligandPart>
        <name>Fe</name>
        <dbReference type="ChEBI" id="CHEBI:18248"/>
    </ligandPart>
</feature>
<feature type="binding site" description="axial binding residue" evidence="2">
    <location>
        <position position="150"/>
    </location>
    <ligand>
        <name>heme b</name>
        <dbReference type="ChEBI" id="CHEBI:60344"/>
        <label>b562</label>
    </ligand>
    <ligandPart>
        <name>Fe</name>
        <dbReference type="ChEBI" id="CHEBI:18248"/>
    </ligandPart>
</feature>
<feature type="binding site" description="axial binding residue" evidence="2">
    <location>
        <position position="164"/>
    </location>
    <ligand>
        <name>heme b</name>
        <dbReference type="ChEBI" id="CHEBI:60344"/>
        <label>b566</label>
    </ligand>
    <ligandPart>
        <name>Fe</name>
        <dbReference type="ChEBI" id="CHEBI:18248"/>
    </ligandPart>
</feature>
<feature type="binding site" evidence="2">
    <location>
        <position position="169"/>
    </location>
    <ligand>
        <name>a ubiquinone</name>
        <dbReference type="ChEBI" id="CHEBI:16389"/>
    </ligand>
</feature>
<feature type="non-terminal residue">
    <location>
        <position position="1"/>
    </location>
</feature>
<feature type="non-terminal residue">
    <location>
        <position position="308"/>
    </location>
</feature>
<reference key="1">
    <citation type="journal article" date="1991" name="Proc. R. Soc. B">
        <title>Mitochondrial resolution of a deep branch in the genealogical tree for perching birds.</title>
        <authorList>
            <person name="Edwards S.V."/>
            <person name="Arctander P."/>
            <person name="Wilson A.C."/>
        </authorList>
    </citation>
    <scope>NUCLEOTIDE SEQUENCE [GENOMIC DNA]</scope>
</reference>
<reference key="2">
    <citation type="journal article" date="1996" name="Proc. R. Soc. B">
        <authorList>
            <person name="Edwards S.V."/>
            <person name="Arctander P."/>
        </authorList>
    </citation>
    <scope>ERRATUM OF PUBMED:1676522</scope>
</reference>
<sequence length="308" mass="34479">FGSLLGICLATQIITGLLMAMHYTADTTLAFTSVAHTCRNVQFGWLIRNLHANGASMFFICIYLHIGRGLYYGSYLFKETWNTGVILLLTLMATAFVGYVLPWGQMSFWGATVITNLFSAIPYIGQTIVEWAWGGFSVDNPTLTRFFALHFLLPFIITGLTLVHLTFLHETGSNNPLGIPSECDKIPFHPYFSIKDILGFMAMLLPLMSLAMFSPNLLGDPENFTPANPLVTPLHIKPEWYFLFAYAILRSIPNKLGGVLALAASVLILFLIPFLHKSKQRTMTFRPLSQLMFWILVANLLILTWVGS</sequence>
<proteinExistence type="inferred from homology"/>
<organism>
    <name type="scientific">Scytalopus magellanicus</name>
    <name type="common">Magellanic tapaculo</name>
    <dbReference type="NCBI Taxonomy" id="9169"/>
    <lineage>
        <taxon>Eukaryota</taxon>
        <taxon>Metazoa</taxon>
        <taxon>Chordata</taxon>
        <taxon>Craniata</taxon>
        <taxon>Vertebrata</taxon>
        <taxon>Euteleostomi</taxon>
        <taxon>Archelosauria</taxon>
        <taxon>Archosauria</taxon>
        <taxon>Dinosauria</taxon>
        <taxon>Saurischia</taxon>
        <taxon>Theropoda</taxon>
        <taxon>Coelurosauria</taxon>
        <taxon>Aves</taxon>
        <taxon>Neognathae</taxon>
        <taxon>Neoaves</taxon>
        <taxon>Telluraves</taxon>
        <taxon>Australaves</taxon>
        <taxon>Passeriformes</taxon>
        <taxon>Rhinocryptidae</taxon>
        <taxon>Scytalopus</taxon>
    </lineage>
</organism>
<gene>
    <name type="primary">MT-CYB</name>
    <name type="synonym">COB</name>
    <name type="synonym">CYTB</name>
    <name type="synonym">MTCYB</name>
</gene>
<name>CYB_SCYMA</name>
<accession>P29641</accession>
<dbReference type="EMBL" id="X60945">
    <property type="protein sequence ID" value="CAA43280.1"/>
    <property type="molecule type" value="Genomic_DNA"/>
</dbReference>
<dbReference type="PIR" id="S22932">
    <property type="entry name" value="S22932"/>
</dbReference>
<dbReference type="SMR" id="P29641"/>
<dbReference type="GO" id="GO:0005743">
    <property type="term" value="C:mitochondrial inner membrane"/>
    <property type="evidence" value="ECO:0007669"/>
    <property type="project" value="UniProtKB-SubCell"/>
</dbReference>
<dbReference type="GO" id="GO:0046872">
    <property type="term" value="F:metal ion binding"/>
    <property type="evidence" value="ECO:0007669"/>
    <property type="project" value="UniProtKB-KW"/>
</dbReference>
<dbReference type="GO" id="GO:0008121">
    <property type="term" value="F:ubiquinol-cytochrome-c reductase activity"/>
    <property type="evidence" value="ECO:0007669"/>
    <property type="project" value="TreeGrafter"/>
</dbReference>
<dbReference type="GO" id="GO:0006122">
    <property type="term" value="P:mitochondrial electron transport, ubiquinol to cytochrome c"/>
    <property type="evidence" value="ECO:0007669"/>
    <property type="project" value="TreeGrafter"/>
</dbReference>
<dbReference type="CDD" id="cd00290">
    <property type="entry name" value="cytochrome_b_C"/>
    <property type="match status" value="1"/>
</dbReference>
<dbReference type="CDD" id="cd00284">
    <property type="entry name" value="Cytochrome_b_N"/>
    <property type="match status" value="1"/>
</dbReference>
<dbReference type="FunFam" id="1.20.810.10:FF:000002">
    <property type="entry name" value="Cytochrome b"/>
    <property type="match status" value="1"/>
</dbReference>
<dbReference type="Gene3D" id="1.20.810.10">
    <property type="entry name" value="Cytochrome Bc1 Complex, Chain C"/>
    <property type="match status" value="1"/>
</dbReference>
<dbReference type="InterPro" id="IPR005798">
    <property type="entry name" value="Cyt_b/b6_C"/>
</dbReference>
<dbReference type="InterPro" id="IPR036150">
    <property type="entry name" value="Cyt_b/b6_C_sf"/>
</dbReference>
<dbReference type="InterPro" id="IPR005797">
    <property type="entry name" value="Cyt_b/b6_N"/>
</dbReference>
<dbReference type="InterPro" id="IPR027387">
    <property type="entry name" value="Cytb/b6-like_sf"/>
</dbReference>
<dbReference type="InterPro" id="IPR048260">
    <property type="entry name" value="Cytochrome_b_C_euk/bac"/>
</dbReference>
<dbReference type="InterPro" id="IPR048259">
    <property type="entry name" value="Cytochrome_b_N_euk/bac"/>
</dbReference>
<dbReference type="InterPro" id="IPR016174">
    <property type="entry name" value="Di-haem_cyt_TM"/>
</dbReference>
<dbReference type="PANTHER" id="PTHR19271">
    <property type="entry name" value="CYTOCHROME B"/>
    <property type="match status" value="1"/>
</dbReference>
<dbReference type="PANTHER" id="PTHR19271:SF16">
    <property type="entry name" value="CYTOCHROME B"/>
    <property type="match status" value="1"/>
</dbReference>
<dbReference type="Pfam" id="PF00032">
    <property type="entry name" value="Cytochrom_B_C"/>
    <property type="match status" value="1"/>
</dbReference>
<dbReference type="Pfam" id="PF00033">
    <property type="entry name" value="Cytochrome_B"/>
    <property type="match status" value="1"/>
</dbReference>
<dbReference type="SUPFAM" id="SSF81648">
    <property type="entry name" value="a domain/subunit of cytochrome bc1 complex (Ubiquinol-cytochrome c reductase)"/>
    <property type="match status" value="1"/>
</dbReference>
<dbReference type="SUPFAM" id="SSF81342">
    <property type="entry name" value="Transmembrane di-heme cytochromes"/>
    <property type="match status" value="1"/>
</dbReference>
<dbReference type="PROSITE" id="PS51003">
    <property type="entry name" value="CYTB_CTER"/>
    <property type="match status" value="1"/>
</dbReference>
<dbReference type="PROSITE" id="PS51002">
    <property type="entry name" value="CYTB_NTER"/>
    <property type="match status" value="1"/>
</dbReference>
<keyword id="KW-0249">Electron transport</keyword>
<keyword id="KW-0349">Heme</keyword>
<keyword id="KW-0408">Iron</keyword>
<keyword id="KW-0472">Membrane</keyword>
<keyword id="KW-0479">Metal-binding</keyword>
<keyword id="KW-0496">Mitochondrion</keyword>
<keyword id="KW-0999">Mitochondrion inner membrane</keyword>
<keyword id="KW-0679">Respiratory chain</keyword>
<keyword id="KW-0812">Transmembrane</keyword>
<keyword id="KW-1133">Transmembrane helix</keyword>
<keyword id="KW-0813">Transport</keyword>
<keyword id="KW-0830">Ubiquinone</keyword>
<geneLocation type="mitochondrion"/>